<accession>O93719</accession>
<accession>D3T0D8</accession>
<accession>Q9P9I2</accession>
<dbReference type="EMBL" id="AJ277988">
    <property type="protein sequence ID" value="CAB93657.1"/>
    <property type="molecule type" value="Genomic_DNA"/>
</dbReference>
<dbReference type="EMBL" id="CP001932">
    <property type="protein sequence ID" value="ADD06417.1"/>
    <property type="molecule type" value="Genomic_DNA"/>
</dbReference>
<dbReference type="EMBL" id="AJ225175">
    <property type="protein sequence ID" value="CAA12419.1"/>
    <property type="molecule type" value="Genomic_DNA"/>
</dbReference>
<dbReference type="RefSeq" id="WP_012996744.1">
    <property type="nucleotide sequence ID" value="NZ_AOHS01000024.1"/>
</dbReference>
<dbReference type="STRING" id="547559.Nmag_2864"/>
<dbReference type="PaxDb" id="547559-Nmag_2864"/>
<dbReference type="KEGG" id="nmg:Nmag_2864"/>
<dbReference type="eggNOG" id="arCOG01829">
    <property type="taxonomic scope" value="Archaea"/>
</dbReference>
<dbReference type="HOGENOM" id="CLU_602181_0_0_2"/>
<dbReference type="OrthoDB" id="102632at2157"/>
<dbReference type="Proteomes" id="UP000001879">
    <property type="component" value="Chromosome"/>
</dbReference>
<dbReference type="GO" id="GO:0097589">
    <property type="term" value="C:archaeal-type flagellum"/>
    <property type="evidence" value="ECO:0007669"/>
    <property type="project" value="UniProtKB-SubCell"/>
</dbReference>
<dbReference type="GO" id="GO:0005198">
    <property type="term" value="F:structural molecule activity"/>
    <property type="evidence" value="ECO:0007669"/>
    <property type="project" value="InterPro"/>
</dbReference>
<dbReference type="GO" id="GO:0097588">
    <property type="term" value="P:archaeal or bacterial-type flagellum-dependent cell motility"/>
    <property type="evidence" value="ECO:0007669"/>
    <property type="project" value="InterPro"/>
</dbReference>
<dbReference type="InterPro" id="IPR013373">
    <property type="entry name" value="Flagellin/pilin_N_arc"/>
</dbReference>
<dbReference type="InterPro" id="IPR002774">
    <property type="entry name" value="Flagellin_arc"/>
</dbReference>
<dbReference type="NCBIfam" id="TIGR02537">
    <property type="entry name" value="arch_flag_Nterm"/>
    <property type="match status" value="1"/>
</dbReference>
<dbReference type="PANTHER" id="PTHR35903">
    <property type="entry name" value="FLAGELLIN B1"/>
    <property type="match status" value="1"/>
</dbReference>
<dbReference type="PANTHER" id="PTHR35903:SF1">
    <property type="entry name" value="FLAGELLIN B1"/>
    <property type="match status" value="1"/>
</dbReference>
<dbReference type="Pfam" id="PF01917">
    <property type="entry name" value="Arch_flagellin"/>
    <property type="match status" value="2"/>
</dbReference>
<keyword id="KW-0974">Archaeal flagellum</keyword>
<keyword id="KW-1185">Reference proteome</keyword>
<protein>
    <recommendedName>
        <fullName>Flagellin B3</fullName>
    </recommendedName>
</protein>
<proteinExistence type="inferred from homology"/>
<sequence length="395" mass="41710">MFTSNTDDDRGQVGIGTLIVFIAMVLVAAIAAGVLINTAGMLQTQAEATGEESTDQVSDRLEISSTSGDFSDVNTLGAGEGEELEVTVEAGDATAAGEEVVIRVATSAESGFEDSKAIELPDEAGDPTTVTLDNLPSIGGALVTVDGENVQAVTEDSVDLTQGDPSVSFNVDELSDDSESTIGLQLTADAGNNFWDEIAEDNIEDTVTVQLTDYERTEAEITNVNNWGSDDAEIEWEATVPADEGDYAVEVIGFDSARMLPISTNEVASTTEDPELGETDTQIDNLQFSVATAPGSDAIDLEETSVQFIGDQGEETVTITDRNVENIQGVDGNVLTDNSDRALVSFDPVADIDGFNRIEESEDLTVIFTTASGASTETELRIPSTFLEGDESVRL</sequence>
<feature type="propeptide" id="PRO_0000009397" evidence="1">
    <location>
        <begin position="1"/>
        <end position="11"/>
    </location>
</feature>
<feature type="chain" id="PRO_0000009398" description="Flagellin B3">
    <location>
        <begin position="12"/>
        <end position="395"/>
    </location>
</feature>
<reference key="1">
    <citation type="submission" date="2000-05" db="EMBL/GenBank/DDBJ databases">
        <title>Sequence organization of the flagellin gene region from Natrialba magadii.</title>
        <authorList>
            <person name="Serganova I.S."/>
            <person name="Ksenzenko V.N."/>
            <person name="Serganov A.A."/>
            <person name="Meshcheryakova I.V."/>
            <person name="Vakhrusheva O.E."/>
            <person name="Metlina A.L."/>
            <person name="Fedorov O.V."/>
        </authorList>
    </citation>
    <scope>NUCLEOTIDE SEQUENCE [GENOMIC DNA]</scope>
</reference>
<reference key="2">
    <citation type="journal article" date="2012" name="BMC Genomics">
        <title>A comparative genomics perspective on the genetic content of the alkaliphilic haloarchaeon Natrialba magadii ATCC 43099T.</title>
        <authorList>
            <person name="Siddaramappa S."/>
            <person name="Challacombe J.F."/>
            <person name="Decastro R.E."/>
            <person name="Pfeiffer F."/>
            <person name="Sastre D.E."/>
            <person name="Gimenez M.I."/>
            <person name="Paggi R.A."/>
            <person name="Detter J.C."/>
            <person name="Davenport K.W."/>
            <person name="Goodwin L.A."/>
            <person name="Kyrpides N."/>
            <person name="Tapia R."/>
            <person name="Pitluck S."/>
            <person name="Lucas S."/>
            <person name="Woyke T."/>
            <person name="Maupin-Furlow J.A."/>
        </authorList>
    </citation>
    <scope>NUCLEOTIDE SEQUENCE [LARGE SCALE GENOMIC DNA]</scope>
    <source>
        <strain>ATCC 43099 / DSM 3394 / CCM 3739 / CIP 104546 / IAM 13178 / JCM 8861 / NBRC 102185 / NCIMB 2190 / MS3</strain>
    </source>
</reference>
<reference key="3">
    <citation type="submission" date="1997-12" db="EMBL/GenBank/DDBJ databases">
        <title>Flagellins of Natromobacterium magadii: cloning and sequencing of the encoding genes.</title>
        <authorList>
            <person name="Serganova I.S."/>
            <person name="Serganov A.A."/>
            <person name="Metlina A.L."/>
            <person name="Fedorov O.V."/>
        </authorList>
    </citation>
    <scope>NUCLEOTIDE SEQUENCE [GENOMIC DNA] OF 1-43</scope>
</reference>
<name>FLAB3_NATMM</name>
<organism>
    <name type="scientific">Natrialba magadii (strain ATCC 43099 / DSM 3394 / CCM 3739 / CIP 104546 / IAM 13178 / JCM 8861 / NBRC 102185 / NCIMB 2190 / MS3)</name>
    <name type="common">Natronobacterium magadii</name>
    <dbReference type="NCBI Taxonomy" id="547559"/>
    <lineage>
        <taxon>Archaea</taxon>
        <taxon>Methanobacteriati</taxon>
        <taxon>Methanobacteriota</taxon>
        <taxon>Stenosarchaea group</taxon>
        <taxon>Halobacteria</taxon>
        <taxon>Halobacteriales</taxon>
        <taxon>Natrialbaceae</taxon>
        <taxon>Natrialba</taxon>
    </lineage>
</organism>
<evidence type="ECO:0000250" key="1"/>
<evidence type="ECO:0000305" key="2"/>
<gene>
    <name type="primary">flaB3</name>
    <name type="ordered locus">Nmag_2864</name>
</gene>
<comment type="function">
    <text>Flagellin is the subunit protein which polymerizes to form the filaments of archaeal flagella.</text>
</comment>
<comment type="subcellular location">
    <subcellularLocation>
        <location>Archaeal flagellum</location>
    </subcellularLocation>
</comment>
<comment type="similarity">
    <text evidence="2">Belongs to the archaeal flagellin family.</text>
</comment>